<evidence type="ECO:0000255" key="1">
    <source>
        <dbReference type="HAMAP-Rule" id="MF_00044"/>
    </source>
</evidence>
<dbReference type="EC" id="6.1.1.23" evidence="1"/>
<dbReference type="EMBL" id="CP000949">
    <property type="protein sequence ID" value="ACA74482.1"/>
    <property type="molecule type" value="Genomic_DNA"/>
</dbReference>
<dbReference type="SMR" id="B1JD74"/>
<dbReference type="STRING" id="390235.PputW619_4002"/>
<dbReference type="KEGG" id="ppw:PputW619_4002"/>
<dbReference type="eggNOG" id="COG0173">
    <property type="taxonomic scope" value="Bacteria"/>
</dbReference>
<dbReference type="HOGENOM" id="CLU_014330_3_2_6"/>
<dbReference type="OrthoDB" id="9802326at2"/>
<dbReference type="GO" id="GO:0005737">
    <property type="term" value="C:cytoplasm"/>
    <property type="evidence" value="ECO:0007669"/>
    <property type="project" value="UniProtKB-SubCell"/>
</dbReference>
<dbReference type="GO" id="GO:0004815">
    <property type="term" value="F:aspartate-tRNA ligase activity"/>
    <property type="evidence" value="ECO:0007669"/>
    <property type="project" value="UniProtKB-UniRule"/>
</dbReference>
<dbReference type="GO" id="GO:0050560">
    <property type="term" value="F:aspartate-tRNA(Asn) ligase activity"/>
    <property type="evidence" value="ECO:0007669"/>
    <property type="project" value="UniProtKB-EC"/>
</dbReference>
<dbReference type="GO" id="GO:0005524">
    <property type="term" value="F:ATP binding"/>
    <property type="evidence" value="ECO:0007669"/>
    <property type="project" value="UniProtKB-UniRule"/>
</dbReference>
<dbReference type="GO" id="GO:0003676">
    <property type="term" value="F:nucleic acid binding"/>
    <property type="evidence" value="ECO:0007669"/>
    <property type="project" value="InterPro"/>
</dbReference>
<dbReference type="GO" id="GO:0006422">
    <property type="term" value="P:aspartyl-tRNA aminoacylation"/>
    <property type="evidence" value="ECO:0007669"/>
    <property type="project" value="UniProtKB-UniRule"/>
</dbReference>
<dbReference type="CDD" id="cd00777">
    <property type="entry name" value="AspRS_core"/>
    <property type="match status" value="1"/>
</dbReference>
<dbReference type="CDD" id="cd04317">
    <property type="entry name" value="EcAspRS_like_N"/>
    <property type="match status" value="1"/>
</dbReference>
<dbReference type="Gene3D" id="3.30.930.10">
    <property type="entry name" value="Bira Bifunctional Protein, Domain 2"/>
    <property type="match status" value="1"/>
</dbReference>
<dbReference type="Gene3D" id="3.30.1360.30">
    <property type="entry name" value="GAD-like domain"/>
    <property type="match status" value="1"/>
</dbReference>
<dbReference type="Gene3D" id="2.40.50.140">
    <property type="entry name" value="Nucleic acid-binding proteins"/>
    <property type="match status" value="1"/>
</dbReference>
<dbReference type="HAMAP" id="MF_00044">
    <property type="entry name" value="Asp_tRNA_synth_type1"/>
    <property type="match status" value="1"/>
</dbReference>
<dbReference type="InterPro" id="IPR004364">
    <property type="entry name" value="Aa-tRNA-synt_II"/>
</dbReference>
<dbReference type="InterPro" id="IPR006195">
    <property type="entry name" value="aa-tRNA-synth_II"/>
</dbReference>
<dbReference type="InterPro" id="IPR045864">
    <property type="entry name" value="aa-tRNA-synth_II/BPL/LPL"/>
</dbReference>
<dbReference type="InterPro" id="IPR004524">
    <property type="entry name" value="Asp-tRNA-ligase_1"/>
</dbReference>
<dbReference type="InterPro" id="IPR047089">
    <property type="entry name" value="Asp-tRNA-ligase_1_N"/>
</dbReference>
<dbReference type="InterPro" id="IPR002312">
    <property type="entry name" value="Asp/Asn-tRNA-synth_IIb"/>
</dbReference>
<dbReference type="InterPro" id="IPR047090">
    <property type="entry name" value="AspRS_core"/>
</dbReference>
<dbReference type="InterPro" id="IPR004115">
    <property type="entry name" value="GAD-like_sf"/>
</dbReference>
<dbReference type="InterPro" id="IPR029351">
    <property type="entry name" value="GAD_dom"/>
</dbReference>
<dbReference type="InterPro" id="IPR012340">
    <property type="entry name" value="NA-bd_OB-fold"/>
</dbReference>
<dbReference type="InterPro" id="IPR004365">
    <property type="entry name" value="NA-bd_OB_tRNA"/>
</dbReference>
<dbReference type="NCBIfam" id="TIGR00459">
    <property type="entry name" value="aspS_bact"/>
    <property type="match status" value="1"/>
</dbReference>
<dbReference type="NCBIfam" id="NF001750">
    <property type="entry name" value="PRK00476.1"/>
    <property type="match status" value="1"/>
</dbReference>
<dbReference type="PANTHER" id="PTHR22594:SF5">
    <property type="entry name" value="ASPARTATE--TRNA LIGASE, MITOCHONDRIAL"/>
    <property type="match status" value="1"/>
</dbReference>
<dbReference type="PANTHER" id="PTHR22594">
    <property type="entry name" value="ASPARTYL/LYSYL-TRNA SYNTHETASE"/>
    <property type="match status" value="1"/>
</dbReference>
<dbReference type="Pfam" id="PF02938">
    <property type="entry name" value="GAD"/>
    <property type="match status" value="1"/>
</dbReference>
<dbReference type="Pfam" id="PF00152">
    <property type="entry name" value="tRNA-synt_2"/>
    <property type="match status" value="1"/>
</dbReference>
<dbReference type="Pfam" id="PF01336">
    <property type="entry name" value="tRNA_anti-codon"/>
    <property type="match status" value="1"/>
</dbReference>
<dbReference type="PRINTS" id="PR01042">
    <property type="entry name" value="TRNASYNTHASP"/>
</dbReference>
<dbReference type="SUPFAM" id="SSF55681">
    <property type="entry name" value="Class II aaRS and biotin synthetases"/>
    <property type="match status" value="1"/>
</dbReference>
<dbReference type="SUPFAM" id="SSF55261">
    <property type="entry name" value="GAD domain-like"/>
    <property type="match status" value="1"/>
</dbReference>
<dbReference type="SUPFAM" id="SSF50249">
    <property type="entry name" value="Nucleic acid-binding proteins"/>
    <property type="match status" value="1"/>
</dbReference>
<dbReference type="PROSITE" id="PS50862">
    <property type="entry name" value="AA_TRNA_LIGASE_II"/>
    <property type="match status" value="1"/>
</dbReference>
<sequence length="591" mass="66492">MMRSHYCGQLNESLDGQEVTLCGWVHRRRDHGGVIFLDIRDREGMAQVVFDPDRAETFAAADRVRSEYVVQITGKVRKRPDGAVNANMASGAIEILGYQLNVLNEAETPPFPLNEYSDVGEETRLRYRFIDLRRPEMADKLRLRSRITSSIRRFLDENGFLDVETPILTRATPEGARDYLVPSRTHAGSFFALPQSPQLFKQLLMVAGFDRYYQIAKCFRDEDLRADRQPEFTQIDIETSFLDESEIMGLTESMIRKLFKEVLDLEFGEFPHMTFEEAMRRYGSDKPDLRNPLELVDVADQLKDVDFKVFAGPANDPKCRVTALRLPGGASMPRSKIDEYTKFVGIYGARGLAYIKVNERAKGVEGLQSPIVKNIPEANLNVILDRVGAVDGDIVFFGADKFKVVSEALGALRIRLGHDFELLTCEWAPMWVVDFPMFEENEDGSFTALHHPFTAPKCTPEELEANPATALSRAYDMVLNGTELGGGSIRIHRKEMQQAVFRLLGIEAAEQEEKFGFLLDALKFGAPPHGGLAFGLDRLVMLMTGAQSIREVIAFPKTQSAACVMTQAPGLVDAKALRELHIRLREQTKVE</sequence>
<proteinExistence type="inferred from homology"/>
<protein>
    <recommendedName>
        <fullName evidence="1">Aspartate--tRNA(Asp/Asn) ligase</fullName>
        <ecNumber evidence="1">6.1.1.23</ecNumber>
    </recommendedName>
    <alternativeName>
        <fullName evidence="1">Aspartyl-tRNA synthetase</fullName>
        <shortName evidence="1">AspRS</shortName>
    </alternativeName>
    <alternativeName>
        <fullName evidence="1">Non-discriminating aspartyl-tRNA synthetase</fullName>
        <shortName evidence="1">ND-AspRS</shortName>
    </alternativeName>
</protein>
<reference key="1">
    <citation type="submission" date="2008-02" db="EMBL/GenBank/DDBJ databases">
        <title>Complete sequence of Pseudomonas putida W619.</title>
        <authorList>
            <person name="Copeland A."/>
            <person name="Lucas S."/>
            <person name="Lapidus A."/>
            <person name="Barry K."/>
            <person name="Detter J.C."/>
            <person name="Glavina del Rio T."/>
            <person name="Dalin E."/>
            <person name="Tice H."/>
            <person name="Pitluck S."/>
            <person name="Chain P."/>
            <person name="Malfatti S."/>
            <person name="Shin M."/>
            <person name="Vergez L."/>
            <person name="Schmutz J."/>
            <person name="Larimer F."/>
            <person name="Land M."/>
            <person name="Hauser L."/>
            <person name="Kyrpides N."/>
            <person name="Kim E."/>
            <person name="Taghavi S."/>
            <person name="Vangronsveld D."/>
            <person name="van der Lelie D."/>
            <person name="Richardson P."/>
        </authorList>
    </citation>
    <scope>NUCLEOTIDE SEQUENCE [LARGE SCALE GENOMIC DNA]</scope>
    <source>
        <strain>W619</strain>
    </source>
</reference>
<gene>
    <name evidence="1" type="primary">aspS</name>
    <name type="ordered locus">PputW619_4002</name>
</gene>
<keyword id="KW-0030">Aminoacyl-tRNA synthetase</keyword>
<keyword id="KW-0067">ATP-binding</keyword>
<keyword id="KW-0963">Cytoplasm</keyword>
<keyword id="KW-0436">Ligase</keyword>
<keyword id="KW-0547">Nucleotide-binding</keyword>
<keyword id="KW-0648">Protein biosynthesis</keyword>
<name>SYDND_PSEPW</name>
<feature type="chain" id="PRO_1000091029" description="Aspartate--tRNA(Asp/Asn) ligase">
    <location>
        <begin position="1"/>
        <end position="591"/>
    </location>
</feature>
<feature type="region of interest" description="Aspartate" evidence="1">
    <location>
        <begin position="198"/>
        <end position="201"/>
    </location>
</feature>
<feature type="binding site" evidence="1">
    <location>
        <position position="174"/>
    </location>
    <ligand>
        <name>L-aspartate</name>
        <dbReference type="ChEBI" id="CHEBI:29991"/>
    </ligand>
</feature>
<feature type="binding site" evidence="1">
    <location>
        <begin position="220"/>
        <end position="222"/>
    </location>
    <ligand>
        <name>ATP</name>
        <dbReference type="ChEBI" id="CHEBI:30616"/>
    </ligand>
</feature>
<feature type="binding site" evidence="1">
    <location>
        <position position="220"/>
    </location>
    <ligand>
        <name>L-aspartate</name>
        <dbReference type="ChEBI" id="CHEBI:29991"/>
    </ligand>
</feature>
<feature type="binding site" evidence="1">
    <location>
        <position position="229"/>
    </location>
    <ligand>
        <name>ATP</name>
        <dbReference type="ChEBI" id="CHEBI:30616"/>
    </ligand>
</feature>
<feature type="binding site" evidence="1">
    <location>
        <position position="450"/>
    </location>
    <ligand>
        <name>L-aspartate</name>
        <dbReference type="ChEBI" id="CHEBI:29991"/>
    </ligand>
</feature>
<feature type="binding site" evidence="1">
    <location>
        <position position="483"/>
    </location>
    <ligand>
        <name>ATP</name>
        <dbReference type="ChEBI" id="CHEBI:30616"/>
    </ligand>
</feature>
<feature type="binding site" evidence="1">
    <location>
        <position position="490"/>
    </location>
    <ligand>
        <name>L-aspartate</name>
        <dbReference type="ChEBI" id="CHEBI:29991"/>
    </ligand>
</feature>
<feature type="binding site" evidence="1">
    <location>
        <begin position="535"/>
        <end position="538"/>
    </location>
    <ligand>
        <name>ATP</name>
        <dbReference type="ChEBI" id="CHEBI:30616"/>
    </ligand>
</feature>
<feature type="site" description="Important for tRNA non-discrimination" evidence="1">
    <location>
        <position position="31"/>
    </location>
</feature>
<feature type="site" description="Important for tRNA non-discrimination" evidence="1">
    <location>
        <position position="82"/>
    </location>
</feature>
<accession>B1JD74</accession>
<organism>
    <name type="scientific">Pseudomonas putida (strain W619)</name>
    <dbReference type="NCBI Taxonomy" id="390235"/>
    <lineage>
        <taxon>Bacteria</taxon>
        <taxon>Pseudomonadati</taxon>
        <taxon>Pseudomonadota</taxon>
        <taxon>Gammaproteobacteria</taxon>
        <taxon>Pseudomonadales</taxon>
        <taxon>Pseudomonadaceae</taxon>
        <taxon>Pseudomonas</taxon>
    </lineage>
</organism>
<comment type="function">
    <text evidence="1">Aspartyl-tRNA synthetase with relaxed tRNA specificity since it is able to aspartylate not only its cognate tRNA(Asp) but also tRNA(Asn). Reaction proceeds in two steps: L-aspartate is first activated by ATP to form Asp-AMP and then transferred to the acceptor end of tRNA(Asp/Asn).</text>
</comment>
<comment type="catalytic activity">
    <reaction evidence="1">
        <text>tRNA(Asx) + L-aspartate + ATP = L-aspartyl-tRNA(Asx) + AMP + diphosphate</text>
        <dbReference type="Rhea" id="RHEA:18349"/>
        <dbReference type="Rhea" id="RHEA-COMP:9710"/>
        <dbReference type="Rhea" id="RHEA-COMP:9711"/>
        <dbReference type="ChEBI" id="CHEBI:29991"/>
        <dbReference type="ChEBI" id="CHEBI:30616"/>
        <dbReference type="ChEBI" id="CHEBI:33019"/>
        <dbReference type="ChEBI" id="CHEBI:78442"/>
        <dbReference type="ChEBI" id="CHEBI:78516"/>
        <dbReference type="ChEBI" id="CHEBI:456215"/>
        <dbReference type="EC" id="6.1.1.23"/>
    </reaction>
</comment>
<comment type="subunit">
    <text evidence="1">Homodimer.</text>
</comment>
<comment type="subcellular location">
    <subcellularLocation>
        <location evidence="1">Cytoplasm</location>
    </subcellularLocation>
</comment>
<comment type="similarity">
    <text evidence="1">Belongs to the class-II aminoacyl-tRNA synthetase family. Type 1 subfamily.</text>
</comment>